<evidence type="ECO:0000255" key="1">
    <source>
        <dbReference type="HAMAP-Rule" id="MF_01100"/>
    </source>
</evidence>
<evidence type="ECO:0000255" key="2">
    <source>
        <dbReference type="PROSITE-ProRule" id="PRU01175"/>
    </source>
</evidence>
<dbReference type="EC" id="3.1.3.89" evidence="1"/>
<dbReference type="EMBL" id="CP000720">
    <property type="protein sequence ID" value="ABS48863.1"/>
    <property type="molecule type" value="Genomic_DNA"/>
</dbReference>
<dbReference type="SMR" id="A7FGQ0"/>
<dbReference type="KEGG" id="ypi:YpsIP31758_1449"/>
<dbReference type="HOGENOM" id="CLU_084784_0_0_6"/>
<dbReference type="Proteomes" id="UP000002412">
    <property type="component" value="Chromosome"/>
</dbReference>
<dbReference type="GO" id="GO:0005737">
    <property type="term" value="C:cytoplasm"/>
    <property type="evidence" value="ECO:0007669"/>
    <property type="project" value="UniProtKB-SubCell"/>
</dbReference>
<dbReference type="GO" id="GO:0002953">
    <property type="term" value="F:5'-deoxynucleotidase activity"/>
    <property type="evidence" value="ECO:0007669"/>
    <property type="project" value="UniProtKB-EC"/>
</dbReference>
<dbReference type="GO" id="GO:0046872">
    <property type="term" value="F:metal ion binding"/>
    <property type="evidence" value="ECO:0007669"/>
    <property type="project" value="UniProtKB-KW"/>
</dbReference>
<dbReference type="GO" id="GO:0000166">
    <property type="term" value="F:nucleotide binding"/>
    <property type="evidence" value="ECO:0007669"/>
    <property type="project" value="UniProtKB-KW"/>
</dbReference>
<dbReference type="FunFam" id="1.10.3210.10:FF:000002">
    <property type="entry name" value="Nucleotidase YfbR"/>
    <property type="match status" value="1"/>
</dbReference>
<dbReference type="Gene3D" id="1.10.3210.10">
    <property type="entry name" value="Hypothetical protein af1432"/>
    <property type="match status" value="1"/>
</dbReference>
<dbReference type="HAMAP" id="MF_01100">
    <property type="entry name" value="5DNU"/>
    <property type="match status" value="1"/>
</dbReference>
<dbReference type="InterPro" id="IPR003607">
    <property type="entry name" value="HD/PDEase_dom"/>
</dbReference>
<dbReference type="InterPro" id="IPR006674">
    <property type="entry name" value="HD_domain"/>
</dbReference>
<dbReference type="InterPro" id="IPR022971">
    <property type="entry name" value="YfbR"/>
</dbReference>
<dbReference type="InterPro" id="IPR039356">
    <property type="entry name" value="YfbR/HDDC2"/>
</dbReference>
<dbReference type="NCBIfam" id="NF003009">
    <property type="entry name" value="PRK03826.1"/>
    <property type="match status" value="1"/>
</dbReference>
<dbReference type="PANTHER" id="PTHR11845">
    <property type="entry name" value="5'-DEOXYNUCLEOTIDASE HDDC2"/>
    <property type="match status" value="1"/>
</dbReference>
<dbReference type="PANTHER" id="PTHR11845:SF13">
    <property type="entry name" value="5'-DEOXYNUCLEOTIDASE HDDC2"/>
    <property type="match status" value="1"/>
</dbReference>
<dbReference type="Pfam" id="PF12917">
    <property type="entry name" value="YfbR-like"/>
    <property type="match status" value="1"/>
</dbReference>
<dbReference type="SMART" id="SM00471">
    <property type="entry name" value="HDc"/>
    <property type="match status" value="1"/>
</dbReference>
<dbReference type="SUPFAM" id="SSF109604">
    <property type="entry name" value="HD-domain/PDEase-like"/>
    <property type="match status" value="1"/>
</dbReference>
<dbReference type="PROSITE" id="PS51831">
    <property type="entry name" value="HD"/>
    <property type="match status" value="1"/>
</dbReference>
<keyword id="KW-0963">Cytoplasm</keyword>
<keyword id="KW-0378">Hydrolase</keyword>
<keyword id="KW-0479">Metal-binding</keyword>
<keyword id="KW-0547">Nucleotide-binding</keyword>
<sequence>MSHFFAHLSRLKLINRWPLMRNVRTENVSEHSLQVAFVAHALAIIKNRKFNGNLNAERIALLAMYHDASEVITGDLPTPIKYHNPKIAHEYKKIEKVAQQKLIEMLPKELQHDFRCLLDEHYYSEEEKALVKQADALCAYLKCLEELSAGNNEFIQAKARLEKTLAIRQSPEMDYFMAVFVPSFSLSLDEISLDSLD</sequence>
<proteinExistence type="inferred from homology"/>
<protein>
    <recommendedName>
        <fullName evidence="1">5'-deoxynucleotidase YpsIP31758_1449</fullName>
        <ecNumber evidence="1">3.1.3.89</ecNumber>
    </recommendedName>
    <alternativeName>
        <fullName evidence="1">5'-deoxyribonucleotidase</fullName>
    </alternativeName>
    <alternativeName>
        <fullName evidence="1">Nucleoside 5'-monophosphate phosphohydrolase</fullName>
    </alternativeName>
</protein>
<name>5DNU_YERP3</name>
<feature type="chain" id="PRO_1000064962" description="5'-deoxynucleotidase YpsIP31758_1449">
    <location>
        <begin position="1"/>
        <end position="197"/>
    </location>
</feature>
<feature type="domain" description="HD" evidence="2">
    <location>
        <begin position="28"/>
        <end position="140"/>
    </location>
</feature>
<feature type="binding site" evidence="1">
    <location>
        <begin position="16"/>
        <end position="17"/>
    </location>
    <ligand>
        <name>substrate</name>
    </ligand>
</feature>
<feature type="binding site" evidence="1">
    <location>
        <position position="31"/>
    </location>
    <ligand>
        <name>a divalent metal cation</name>
        <dbReference type="ChEBI" id="CHEBI:60240"/>
    </ligand>
</feature>
<feature type="binding site" evidence="1">
    <location>
        <position position="31"/>
    </location>
    <ligand>
        <name>substrate</name>
    </ligand>
</feature>
<feature type="binding site" evidence="1">
    <location>
        <position position="66"/>
    </location>
    <ligand>
        <name>a divalent metal cation</name>
        <dbReference type="ChEBI" id="CHEBI:60240"/>
    </ligand>
</feature>
<feature type="binding site" evidence="1">
    <location>
        <position position="67"/>
    </location>
    <ligand>
        <name>a divalent metal cation</name>
        <dbReference type="ChEBI" id="CHEBI:60240"/>
    </ligand>
</feature>
<feature type="binding site" evidence="1">
    <location>
        <position position="67"/>
    </location>
    <ligand>
        <name>substrate</name>
    </ligand>
</feature>
<feature type="binding site" evidence="1">
    <location>
        <begin position="75"/>
        <end position="78"/>
    </location>
    <ligand>
        <name>substrate</name>
    </ligand>
</feature>
<feature type="binding site" evidence="1">
    <location>
        <position position="135"/>
    </location>
    <ligand>
        <name>a divalent metal cation</name>
        <dbReference type="ChEBI" id="CHEBI:60240"/>
    </ligand>
</feature>
<feature type="binding site" evidence="1">
    <location>
        <position position="135"/>
    </location>
    <ligand>
        <name>substrate</name>
    </ligand>
</feature>
<feature type="site" description="Appears to be important in orienting the phosphate for catalysis" evidence="1">
    <location>
        <position position="16"/>
    </location>
</feature>
<organism>
    <name type="scientific">Yersinia pseudotuberculosis serotype O:1b (strain IP 31758)</name>
    <dbReference type="NCBI Taxonomy" id="349747"/>
    <lineage>
        <taxon>Bacteria</taxon>
        <taxon>Pseudomonadati</taxon>
        <taxon>Pseudomonadota</taxon>
        <taxon>Gammaproteobacteria</taxon>
        <taxon>Enterobacterales</taxon>
        <taxon>Yersiniaceae</taxon>
        <taxon>Yersinia</taxon>
    </lineage>
</organism>
<accession>A7FGQ0</accession>
<gene>
    <name type="ordered locus">YpsIP31758_1449</name>
</gene>
<reference key="1">
    <citation type="journal article" date="2007" name="PLoS Genet.">
        <title>The complete genome sequence of Yersinia pseudotuberculosis IP31758, the causative agent of Far East scarlet-like fever.</title>
        <authorList>
            <person name="Eppinger M."/>
            <person name="Rosovitz M.J."/>
            <person name="Fricke W.F."/>
            <person name="Rasko D.A."/>
            <person name="Kokorina G."/>
            <person name="Fayolle C."/>
            <person name="Lindler L.E."/>
            <person name="Carniel E."/>
            <person name="Ravel J."/>
        </authorList>
    </citation>
    <scope>NUCLEOTIDE SEQUENCE [LARGE SCALE GENOMIC DNA]</scope>
    <source>
        <strain>IP 31758</strain>
    </source>
</reference>
<comment type="function">
    <text evidence="1">Catalyzes the strictly specific dephosphorylation of 2'-deoxyribonucleoside 5'-monophosphates.</text>
</comment>
<comment type="catalytic activity">
    <reaction evidence="1">
        <text>a 2'-deoxyribonucleoside 5'-phosphate + H2O = a 2'-deoxyribonucleoside + phosphate</text>
        <dbReference type="Rhea" id="RHEA:36167"/>
        <dbReference type="ChEBI" id="CHEBI:15377"/>
        <dbReference type="ChEBI" id="CHEBI:18274"/>
        <dbReference type="ChEBI" id="CHEBI:43474"/>
        <dbReference type="ChEBI" id="CHEBI:65317"/>
        <dbReference type="EC" id="3.1.3.89"/>
    </reaction>
</comment>
<comment type="cofactor">
    <cofactor evidence="1">
        <name>a divalent metal cation</name>
        <dbReference type="ChEBI" id="CHEBI:60240"/>
    </cofactor>
</comment>
<comment type="subunit">
    <text evidence="1">Homodimer.</text>
</comment>
<comment type="subcellular location">
    <subcellularLocation>
        <location evidence="1">Cytoplasm</location>
    </subcellularLocation>
</comment>
<comment type="similarity">
    <text evidence="1">Belongs to the 5DNU family.</text>
</comment>